<organism>
    <name type="scientific">Bordetella avium (strain 197N)</name>
    <dbReference type="NCBI Taxonomy" id="360910"/>
    <lineage>
        <taxon>Bacteria</taxon>
        <taxon>Pseudomonadati</taxon>
        <taxon>Pseudomonadota</taxon>
        <taxon>Betaproteobacteria</taxon>
        <taxon>Burkholderiales</taxon>
        <taxon>Alcaligenaceae</taxon>
        <taxon>Bordetella</taxon>
    </lineage>
</organism>
<name>TRPF_BORA1</name>
<keyword id="KW-0028">Amino-acid biosynthesis</keyword>
<keyword id="KW-0057">Aromatic amino acid biosynthesis</keyword>
<keyword id="KW-0413">Isomerase</keyword>
<keyword id="KW-1185">Reference proteome</keyword>
<keyword id="KW-0822">Tryptophan biosynthesis</keyword>
<evidence type="ECO:0000255" key="1">
    <source>
        <dbReference type="HAMAP-Rule" id="MF_00135"/>
    </source>
</evidence>
<sequence length="219" mass="23380">MRTRVKICGLTREADIAQAIEAGVDAIGLICYAGSKRYVDLARAARLRREVPAFVSVVTLFVNPAPDEVRAVLDHVGPDLLQFHGDESPEDCTRYGHRFMRAFRVGAAGLDSAGAIAAACRPYHEAAGWLFDSYSSGYGGSGLTFDHSLLAEVQADAGSRPLVLAGGLNPDNIAQALALVQPWAVDVSSGVESGPGLKSADKMKEFLKRIKKVDDDLHA</sequence>
<accession>Q2KYM1</accession>
<feature type="chain" id="PRO_1000076429" description="N-(5'-phosphoribosyl)anthranilate isomerase">
    <location>
        <begin position="1"/>
        <end position="219"/>
    </location>
</feature>
<proteinExistence type="inferred from homology"/>
<gene>
    <name evidence="1" type="primary">trpF</name>
    <name type="ordered locus">BAV2264</name>
</gene>
<protein>
    <recommendedName>
        <fullName evidence="1">N-(5'-phosphoribosyl)anthranilate isomerase</fullName>
        <shortName evidence="1">PRAI</shortName>
        <ecNumber evidence="1">5.3.1.24</ecNumber>
    </recommendedName>
</protein>
<dbReference type="EC" id="5.3.1.24" evidence="1"/>
<dbReference type="EMBL" id="AM167904">
    <property type="protein sequence ID" value="CAJ49874.1"/>
    <property type="molecule type" value="Genomic_DNA"/>
</dbReference>
<dbReference type="RefSeq" id="WP_012417925.1">
    <property type="nucleotide sequence ID" value="NC_010645.1"/>
</dbReference>
<dbReference type="SMR" id="Q2KYM1"/>
<dbReference type="STRING" id="360910.BAV2264"/>
<dbReference type="GeneID" id="92934622"/>
<dbReference type="KEGG" id="bav:BAV2264"/>
<dbReference type="eggNOG" id="COG0135">
    <property type="taxonomic scope" value="Bacteria"/>
</dbReference>
<dbReference type="HOGENOM" id="CLU_076364_2_0_4"/>
<dbReference type="OrthoDB" id="9796196at2"/>
<dbReference type="UniPathway" id="UPA00035">
    <property type="reaction ID" value="UER00042"/>
</dbReference>
<dbReference type="Proteomes" id="UP000001977">
    <property type="component" value="Chromosome"/>
</dbReference>
<dbReference type="GO" id="GO:0004640">
    <property type="term" value="F:phosphoribosylanthranilate isomerase activity"/>
    <property type="evidence" value="ECO:0007669"/>
    <property type="project" value="UniProtKB-UniRule"/>
</dbReference>
<dbReference type="GO" id="GO:0000162">
    <property type="term" value="P:L-tryptophan biosynthetic process"/>
    <property type="evidence" value="ECO:0007669"/>
    <property type="project" value="UniProtKB-UniRule"/>
</dbReference>
<dbReference type="CDD" id="cd00405">
    <property type="entry name" value="PRAI"/>
    <property type="match status" value="1"/>
</dbReference>
<dbReference type="Gene3D" id="3.20.20.70">
    <property type="entry name" value="Aldolase class I"/>
    <property type="match status" value="1"/>
</dbReference>
<dbReference type="HAMAP" id="MF_00135">
    <property type="entry name" value="PRAI"/>
    <property type="match status" value="1"/>
</dbReference>
<dbReference type="InterPro" id="IPR013785">
    <property type="entry name" value="Aldolase_TIM"/>
</dbReference>
<dbReference type="InterPro" id="IPR001240">
    <property type="entry name" value="PRAI_dom"/>
</dbReference>
<dbReference type="InterPro" id="IPR011060">
    <property type="entry name" value="RibuloseP-bd_barrel"/>
</dbReference>
<dbReference type="InterPro" id="IPR044643">
    <property type="entry name" value="TrpF_fam"/>
</dbReference>
<dbReference type="NCBIfam" id="NF002298">
    <property type="entry name" value="PRK01222.1-4"/>
    <property type="match status" value="1"/>
</dbReference>
<dbReference type="PANTHER" id="PTHR42894">
    <property type="entry name" value="N-(5'-PHOSPHORIBOSYL)ANTHRANILATE ISOMERASE"/>
    <property type="match status" value="1"/>
</dbReference>
<dbReference type="PANTHER" id="PTHR42894:SF1">
    <property type="entry name" value="N-(5'-PHOSPHORIBOSYL)ANTHRANILATE ISOMERASE"/>
    <property type="match status" value="1"/>
</dbReference>
<dbReference type="Pfam" id="PF00697">
    <property type="entry name" value="PRAI"/>
    <property type="match status" value="1"/>
</dbReference>
<dbReference type="SUPFAM" id="SSF51366">
    <property type="entry name" value="Ribulose-phoshate binding barrel"/>
    <property type="match status" value="1"/>
</dbReference>
<reference key="1">
    <citation type="journal article" date="2006" name="J. Bacteriol.">
        <title>Comparison of the genome sequence of the poultry pathogen Bordetella avium with those of B. bronchiseptica, B. pertussis, and B. parapertussis reveals extensive diversity in surface structures associated with host interaction.</title>
        <authorList>
            <person name="Sebaihia M."/>
            <person name="Preston A."/>
            <person name="Maskell D.J."/>
            <person name="Kuzmiak H."/>
            <person name="Connell T.D."/>
            <person name="King N.D."/>
            <person name="Orndorff P.E."/>
            <person name="Miyamoto D.M."/>
            <person name="Thomson N.R."/>
            <person name="Harris D."/>
            <person name="Goble A."/>
            <person name="Lord A."/>
            <person name="Murphy L."/>
            <person name="Quail M.A."/>
            <person name="Rutter S."/>
            <person name="Squares R."/>
            <person name="Squares S."/>
            <person name="Woodward J."/>
            <person name="Parkhill J."/>
            <person name="Temple L.M."/>
        </authorList>
    </citation>
    <scope>NUCLEOTIDE SEQUENCE [LARGE SCALE GENOMIC DNA]</scope>
    <source>
        <strain>197N</strain>
    </source>
</reference>
<comment type="catalytic activity">
    <reaction evidence="1">
        <text>N-(5-phospho-beta-D-ribosyl)anthranilate = 1-(2-carboxyphenylamino)-1-deoxy-D-ribulose 5-phosphate</text>
        <dbReference type="Rhea" id="RHEA:21540"/>
        <dbReference type="ChEBI" id="CHEBI:18277"/>
        <dbReference type="ChEBI" id="CHEBI:58613"/>
        <dbReference type="EC" id="5.3.1.24"/>
    </reaction>
</comment>
<comment type="pathway">
    <text evidence="1">Amino-acid biosynthesis; L-tryptophan biosynthesis; L-tryptophan from chorismate: step 3/5.</text>
</comment>
<comment type="similarity">
    <text evidence="1">Belongs to the TrpF family.</text>
</comment>